<sequence>MTTNKSSLSYFTDALWINNQPLVAILGICSALAVTTTVTTALTMGLAVSFVTGFASFVVSLLRKITPESVRMIAQLIIISLFVILIDQFLKAFFFNISKTLSVFVGLIITNCIVMGRAESMARHISPIPAFLDGLGSGLGYGWVLVCISIIRELFGFGTILGFHIIPKIFYASAAHPDGYENLGLMVLAPSAFFLLGIMVWLVNIVRASKTKR</sequence>
<feature type="chain" id="PRO_0000214230" description="Na(+)-translocating NADH-quinone reductase subunit D">
    <location>
        <begin position="1"/>
        <end position="213"/>
    </location>
</feature>
<feature type="transmembrane region" description="Helical" evidence="1">
    <location>
        <begin position="14"/>
        <end position="34"/>
    </location>
</feature>
<feature type="transmembrane region" description="Helical" evidence="1">
    <location>
        <begin position="42"/>
        <end position="62"/>
    </location>
</feature>
<feature type="transmembrane region" description="Helical" evidence="1">
    <location>
        <begin position="77"/>
        <end position="97"/>
    </location>
</feature>
<feature type="transmembrane region" description="Helical" evidence="1">
    <location>
        <begin position="101"/>
        <end position="121"/>
    </location>
</feature>
<feature type="transmembrane region" description="Helical" evidence="1">
    <location>
        <begin position="131"/>
        <end position="151"/>
    </location>
</feature>
<feature type="transmembrane region" description="Helical" evidence="1">
    <location>
        <begin position="154"/>
        <end position="174"/>
    </location>
</feature>
<feature type="transmembrane region" description="Helical" evidence="1">
    <location>
        <begin position="183"/>
        <end position="203"/>
    </location>
</feature>
<evidence type="ECO:0000255" key="1">
    <source>
        <dbReference type="HAMAP-Rule" id="MF_00428"/>
    </source>
</evidence>
<protein>
    <recommendedName>
        <fullName evidence="1">Na(+)-translocating NADH-quinone reductase subunit D</fullName>
        <shortName evidence="1">Na(+)-NQR subunit D</shortName>
        <shortName evidence="1">Na(+)-translocating NQR subunit D</shortName>
        <ecNumber evidence="1">7.2.1.1</ecNumber>
    </recommendedName>
    <alternativeName>
        <fullName evidence="1">NQR complex subunit D</fullName>
    </alternativeName>
    <alternativeName>
        <fullName evidence="1">NQR-1 subunit D</fullName>
    </alternativeName>
</protein>
<dbReference type="EC" id="7.2.1.1" evidence="1"/>
<dbReference type="EMBL" id="AE002160">
    <property type="protein sequence ID" value="AAF39391.1"/>
    <property type="molecule type" value="Genomic_DNA"/>
</dbReference>
<dbReference type="PIR" id="D81690">
    <property type="entry name" value="D81690"/>
</dbReference>
<dbReference type="RefSeq" id="WP_010230820.1">
    <property type="nucleotide sequence ID" value="NZ_CP063055.1"/>
</dbReference>
<dbReference type="SMR" id="Q9PKB4"/>
<dbReference type="GeneID" id="1245912"/>
<dbReference type="KEGG" id="cmu:TC_0552"/>
<dbReference type="eggNOG" id="COG1347">
    <property type="taxonomic scope" value="Bacteria"/>
</dbReference>
<dbReference type="HOGENOM" id="CLU_046659_1_1_0"/>
<dbReference type="OrthoDB" id="9790976at2"/>
<dbReference type="Proteomes" id="UP000000800">
    <property type="component" value="Chromosome"/>
</dbReference>
<dbReference type="GO" id="GO:0005886">
    <property type="term" value="C:plasma membrane"/>
    <property type="evidence" value="ECO:0007669"/>
    <property type="project" value="UniProtKB-SubCell"/>
</dbReference>
<dbReference type="GO" id="GO:0016655">
    <property type="term" value="F:oxidoreductase activity, acting on NAD(P)H, quinone or similar compound as acceptor"/>
    <property type="evidence" value="ECO:0007669"/>
    <property type="project" value="UniProtKB-UniRule"/>
</dbReference>
<dbReference type="GO" id="GO:0006814">
    <property type="term" value="P:sodium ion transport"/>
    <property type="evidence" value="ECO:0007669"/>
    <property type="project" value="UniProtKB-UniRule"/>
</dbReference>
<dbReference type="HAMAP" id="MF_00428">
    <property type="entry name" value="NqrD"/>
    <property type="match status" value="1"/>
</dbReference>
<dbReference type="InterPro" id="IPR011292">
    <property type="entry name" value="NqrD"/>
</dbReference>
<dbReference type="InterPro" id="IPR003667">
    <property type="entry name" value="NqrDE/RnfAE"/>
</dbReference>
<dbReference type="NCBIfam" id="TIGR01939">
    <property type="entry name" value="nqrD"/>
    <property type="match status" value="1"/>
</dbReference>
<dbReference type="NCBIfam" id="NF006777">
    <property type="entry name" value="PRK09292.1"/>
    <property type="match status" value="1"/>
</dbReference>
<dbReference type="PANTHER" id="PTHR30586">
    <property type="entry name" value="ELECTRON TRANSPORT COMPLEX PROTEIN RNFE"/>
    <property type="match status" value="1"/>
</dbReference>
<dbReference type="PANTHER" id="PTHR30586:SF1">
    <property type="entry name" value="NA(+)-TRANSLOCATING NADH-QUINONE REDUCTASE SUBUNIT D"/>
    <property type="match status" value="1"/>
</dbReference>
<dbReference type="Pfam" id="PF02508">
    <property type="entry name" value="Rnf-Nqr"/>
    <property type="match status" value="1"/>
</dbReference>
<dbReference type="PIRSF" id="PIRSF006102">
    <property type="entry name" value="NQR_DE"/>
    <property type="match status" value="1"/>
</dbReference>
<proteinExistence type="inferred from homology"/>
<reference key="1">
    <citation type="journal article" date="2000" name="Nucleic Acids Res.">
        <title>Genome sequences of Chlamydia trachomatis MoPn and Chlamydia pneumoniae AR39.</title>
        <authorList>
            <person name="Read T.D."/>
            <person name="Brunham R.C."/>
            <person name="Shen C."/>
            <person name="Gill S.R."/>
            <person name="Heidelberg J.F."/>
            <person name="White O."/>
            <person name="Hickey E.K."/>
            <person name="Peterson J.D."/>
            <person name="Utterback T.R."/>
            <person name="Berry K.J."/>
            <person name="Bass S."/>
            <person name="Linher K.D."/>
            <person name="Weidman J.F."/>
            <person name="Khouri H.M."/>
            <person name="Craven B."/>
            <person name="Bowman C."/>
            <person name="Dodson R.J."/>
            <person name="Gwinn M.L."/>
            <person name="Nelson W.C."/>
            <person name="DeBoy R.T."/>
            <person name="Kolonay J.F."/>
            <person name="McClarty G."/>
            <person name="Salzberg S.L."/>
            <person name="Eisen J.A."/>
            <person name="Fraser C.M."/>
        </authorList>
    </citation>
    <scope>NUCLEOTIDE SEQUENCE [LARGE SCALE GENOMIC DNA]</scope>
    <source>
        <strain>MoPn / Nigg</strain>
    </source>
</reference>
<accession>Q9PKB4</accession>
<comment type="function">
    <text evidence="1">NQR complex catalyzes the reduction of ubiquinone-1 to ubiquinol by two successive reactions, coupled with the transport of Na(+) ions from the cytoplasm to the periplasm. NqrA to NqrE are probably involved in the second step, the conversion of ubisemiquinone to ubiquinol.</text>
</comment>
<comment type="catalytic activity">
    <reaction evidence="1">
        <text>a ubiquinone + n Na(+)(in) + NADH + H(+) = a ubiquinol + n Na(+)(out) + NAD(+)</text>
        <dbReference type="Rhea" id="RHEA:47748"/>
        <dbReference type="Rhea" id="RHEA-COMP:9565"/>
        <dbReference type="Rhea" id="RHEA-COMP:9566"/>
        <dbReference type="ChEBI" id="CHEBI:15378"/>
        <dbReference type="ChEBI" id="CHEBI:16389"/>
        <dbReference type="ChEBI" id="CHEBI:17976"/>
        <dbReference type="ChEBI" id="CHEBI:29101"/>
        <dbReference type="ChEBI" id="CHEBI:57540"/>
        <dbReference type="ChEBI" id="CHEBI:57945"/>
        <dbReference type="EC" id="7.2.1.1"/>
    </reaction>
</comment>
<comment type="subunit">
    <text evidence="1">Composed of six subunits; NqrA, NqrB, NqrC, NqrD, NqrE and NqrF.</text>
</comment>
<comment type="subcellular location">
    <subcellularLocation>
        <location evidence="1">Cell inner membrane</location>
        <topology evidence="1">Multi-pass membrane protein</topology>
    </subcellularLocation>
</comment>
<comment type="similarity">
    <text evidence="1">Belongs to the NqrDE/RnfAE family.</text>
</comment>
<name>NQRD_CHLMU</name>
<keyword id="KW-0997">Cell inner membrane</keyword>
<keyword id="KW-1003">Cell membrane</keyword>
<keyword id="KW-0406">Ion transport</keyword>
<keyword id="KW-0472">Membrane</keyword>
<keyword id="KW-0520">NAD</keyword>
<keyword id="KW-0915">Sodium</keyword>
<keyword id="KW-0739">Sodium transport</keyword>
<keyword id="KW-1278">Translocase</keyword>
<keyword id="KW-0812">Transmembrane</keyword>
<keyword id="KW-1133">Transmembrane helix</keyword>
<keyword id="KW-0813">Transport</keyword>
<keyword id="KW-0830">Ubiquinone</keyword>
<gene>
    <name evidence="1" type="primary">nqrD</name>
    <name type="ordered locus">TC_0552</name>
</gene>
<organism>
    <name type="scientific">Chlamydia muridarum (strain MoPn / Nigg)</name>
    <dbReference type="NCBI Taxonomy" id="243161"/>
    <lineage>
        <taxon>Bacteria</taxon>
        <taxon>Pseudomonadati</taxon>
        <taxon>Chlamydiota</taxon>
        <taxon>Chlamydiia</taxon>
        <taxon>Chlamydiales</taxon>
        <taxon>Chlamydiaceae</taxon>
        <taxon>Chlamydia/Chlamydophila group</taxon>
        <taxon>Chlamydia</taxon>
    </lineage>
</organism>